<proteinExistence type="inferred from homology"/>
<name>RF3_VIBC3</name>
<sequence>MLMSTTPYFGEVSKRRTFAIISHPDAGKTTITEKVLLFGRAIQVAGTVKGRGSNQHAKSDWMEMEKERGISVTTSVMQFPYGDCLVNLLDTPGHEDFSEDTYRTLTAVDSCLMVIDAAKGVEDRTRKLMEVTRLRDTPIVTFMNKLDREIRDPMELMDEVENELKIACSPITWPIGCGKEFKGVYHIHRDETILYTSGQGHTIQEERIIKGLDNPELDQAVGANLAAQLREELELVLGASHEFDRELFLQGELTPVFFGTALGNFGVDHMLDGLTQWAPSPMPRQAAERVVEASEEKFTGFVFKIQANMDPKHRDRIAFVRIVSGTYKQGMKMNHVRLGKQVNISDAVTFMAGDRARAEEAFAGDIIGLHNHGTIQIGDTFTQGETLKFTGIPNFAPELFRRIRLRDPLKQKQLLKGLVQLSEEGAVQVFRPLQNNDLIVGAVGVLQFDVVVSRLKSEYNVEAIYEGVNVATARWVECDDVKKFEEFKRKNQSNLALDGGDNLAYIAPTMVNLNLAQERSPEVKFRATREH</sequence>
<dbReference type="EMBL" id="CP000627">
    <property type="protein sequence ID" value="ABQ21281.1"/>
    <property type="molecule type" value="Genomic_DNA"/>
</dbReference>
<dbReference type="EMBL" id="CP001235">
    <property type="protein sequence ID" value="ACP08694.1"/>
    <property type="molecule type" value="Genomic_DNA"/>
</dbReference>
<dbReference type="SMR" id="A5F904"/>
<dbReference type="KEGG" id="vco:VC0395_A0190"/>
<dbReference type="KEGG" id="vcr:VC395_0676"/>
<dbReference type="PATRIC" id="fig|345073.21.peg.657"/>
<dbReference type="eggNOG" id="COG4108">
    <property type="taxonomic scope" value="Bacteria"/>
</dbReference>
<dbReference type="HOGENOM" id="CLU_002794_2_1_6"/>
<dbReference type="Proteomes" id="UP000000249">
    <property type="component" value="Chromosome 2"/>
</dbReference>
<dbReference type="GO" id="GO:0005829">
    <property type="term" value="C:cytosol"/>
    <property type="evidence" value="ECO:0007669"/>
    <property type="project" value="TreeGrafter"/>
</dbReference>
<dbReference type="GO" id="GO:0005525">
    <property type="term" value="F:GTP binding"/>
    <property type="evidence" value="ECO:0007669"/>
    <property type="project" value="UniProtKB-UniRule"/>
</dbReference>
<dbReference type="GO" id="GO:0003924">
    <property type="term" value="F:GTPase activity"/>
    <property type="evidence" value="ECO:0007669"/>
    <property type="project" value="InterPro"/>
</dbReference>
<dbReference type="GO" id="GO:0097216">
    <property type="term" value="F:guanosine tetraphosphate binding"/>
    <property type="evidence" value="ECO:0007669"/>
    <property type="project" value="UniProtKB-ARBA"/>
</dbReference>
<dbReference type="GO" id="GO:0016150">
    <property type="term" value="F:translation release factor activity, codon nonspecific"/>
    <property type="evidence" value="ECO:0007669"/>
    <property type="project" value="TreeGrafter"/>
</dbReference>
<dbReference type="GO" id="GO:0016149">
    <property type="term" value="F:translation release factor activity, codon specific"/>
    <property type="evidence" value="ECO:0007669"/>
    <property type="project" value="UniProtKB-UniRule"/>
</dbReference>
<dbReference type="GO" id="GO:0006449">
    <property type="term" value="P:regulation of translational termination"/>
    <property type="evidence" value="ECO:0007669"/>
    <property type="project" value="UniProtKB-UniRule"/>
</dbReference>
<dbReference type="CDD" id="cd04169">
    <property type="entry name" value="RF3"/>
    <property type="match status" value="1"/>
</dbReference>
<dbReference type="CDD" id="cd03689">
    <property type="entry name" value="RF3_II"/>
    <property type="match status" value="1"/>
</dbReference>
<dbReference type="CDD" id="cd16259">
    <property type="entry name" value="RF3_III"/>
    <property type="match status" value="1"/>
</dbReference>
<dbReference type="FunFam" id="2.40.30.10:FF:000040">
    <property type="entry name" value="Peptide chain release factor 3"/>
    <property type="match status" value="1"/>
</dbReference>
<dbReference type="FunFam" id="3.30.70.3280:FF:000001">
    <property type="entry name" value="Peptide chain release factor 3"/>
    <property type="match status" value="1"/>
</dbReference>
<dbReference type="FunFam" id="3.40.50.300:FF:000542">
    <property type="entry name" value="Peptide chain release factor 3"/>
    <property type="match status" value="1"/>
</dbReference>
<dbReference type="Gene3D" id="3.40.50.300">
    <property type="entry name" value="P-loop containing nucleotide triphosphate hydrolases"/>
    <property type="match status" value="3"/>
</dbReference>
<dbReference type="Gene3D" id="3.30.70.3280">
    <property type="entry name" value="Peptide chain release factor 3, domain III"/>
    <property type="match status" value="1"/>
</dbReference>
<dbReference type="HAMAP" id="MF_00072">
    <property type="entry name" value="Rel_fac_3"/>
    <property type="match status" value="1"/>
</dbReference>
<dbReference type="InterPro" id="IPR053905">
    <property type="entry name" value="EF-G-like_DII"/>
</dbReference>
<dbReference type="InterPro" id="IPR035647">
    <property type="entry name" value="EFG_III/V"/>
</dbReference>
<dbReference type="InterPro" id="IPR031157">
    <property type="entry name" value="G_TR_CS"/>
</dbReference>
<dbReference type="InterPro" id="IPR027417">
    <property type="entry name" value="P-loop_NTPase"/>
</dbReference>
<dbReference type="InterPro" id="IPR004548">
    <property type="entry name" value="PrfC"/>
</dbReference>
<dbReference type="InterPro" id="IPR032090">
    <property type="entry name" value="RF3_C"/>
</dbReference>
<dbReference type="InterPro" id="IPR038467">
    <property type="entry name" value="RF3_dom_3_sf"/>
</dbReference>
<dbReference type="InterPro" id="IPR041732">
    <property type="entry name" value="RF3_GTP-bd"/>
</dbReference>
<dbReference type="InterPro" id="IPR005225">
    <property type="entry name" value="Small_GTP-bd"/>
</dbReference>
<dbReference type="InterPro" id="IPR000795">
    <property type="entry name" value="T_Tr_GTP-bd_dom"/>
</dbReference>
<dbReference type="InterPro" id="IPR009000">
    <property type="entry name" value="Transl_B-barrel_sf"/>
</dbReference>
<dbReference type="NCBIfam" id="TIGR00503">
    <property type="entry name" value="prfC"/>
    <property type="match status" value="1"/>
</dbReference>
<dbReference type="NCBIfam" id="NF001964">
    <property type="entry name" value="PRK00741.1"/>
    <property type="match status" value="1"/>
</dbReference>
<dbReference type="NCBIfam" id="TIGR00231">
    <property type="entry name" value="small_GTP"/>
    <property type="match status" value="1"/>
</dbReference>
<dbReference type="PANTHER" id="PTHR43556">
    <property type="entry name" value="PEPTIDE CHAIN RELEASE FACTOR RF3"/>
    <property type="match status" value="1"/>
</dbReference>
<dbReference type="PANTHER" id="PTHR43556:SF2">
    <property type="entry name" value="PEPTIDE CHAIN RELEASE FACTOR RF3"/>
    <property type="match status" value="1"/>
</dbReference>
<dbReference type="Pfam" id="PF22042">
    <property type="entry name" value="EF-G_D2"/>
    <property type="match status" value="1"/>
</dbReference>
<dbReference type="Pfam" id="PF00009">
    <property type="entry name" value="GTP_EFTU"/>
    <property type="match status" value="1"/>
</dbReference>
<dbReference type="Pfam" id="PF16658">
    <property type="entry name" value="RF3_C"/>
    <property type="match status" value="1"/>
</dbReference>
<dbReference type="PRINTS" id="PR00315">
    <property type="entry name" value="ELONGATNFCT"/>
</dbReference>
<dbReference type="SUPFAM" id="SSF54980">
    <property type="entry name" value="EF-G C-terminal domain-like"/>
    <property type="match status" value="1"/>
</dbReference>
<dbReference type="SUPFAM" id="SSF52540">
    <property type="entry name" value="P-loop containing nucleoside triphosphate hydrolases"/>
    <property type="match status" value="1"/>
</dbReference>
<dbReference type="SUPFAM" id="SSF50447">
    <property type="entry name" value="Translation proteins"/>
    <property type="match status" value="1"/>
</dbReference>
<dbReference type="PROSITE" id="PS00301">
    <property type="entry name" value="G_TR_1"/>
    <property type="match status" value="1"/>
</dbReference>
<dbReference type="PROSITE" id="PS51722">
    <property type="entry name" value="G_TR_2"/>
    <property type="match status" value="1"/>
</dbReference>
<organism>
    <name type="scientific">Vibrio cholerae serotype O1 (strain ATCC 39541 / Classical Ogawa 395 / O395)</name>
    <dbReference type="NCBI Taxonomy" id="345073"/>
    <lineage>
        <taxon>Bacteria</taxon>
        <taxon>Pseudomonadati</taxon>
        <taxon>Pseudomonadota</taxon>
        <taxon>Gammaproteobacteria</taxon>
        <taxon>Vibrionales</taxon>
        <taxon>Vibrionaceae</taxon>
        <taxon>Vibrio</taxon>
    </lineage>
</organism>
<comment type="function">
    <text evidence="1">Increases the formation of ribosomal termination complexes and stimulates activities of RF-1 and RF-2. It binds guanine nucleotides and has strong preference for UGA stop codons. It may interact directly with the ribosome. The stimulation of RF-1 and RF-2 is significantly reduced by GTP and GDP, but not by GMP.</text>
</comment>
<comment type="subcellular location">
    <subcellularLocation>
        <location evidence="1">Cytoplasm</location>
    </subcellularLocation>
</comment>
<comment type="similarity">
    <text evidence="1">Belongs to the TRAFAC class translation factor GTPase superfamily. Classic translation factor GTPase family. PrfC subfamily.</text>
</comment>
<accession>A5F904</accession>
<accession>C3LXX0</accession>
<protein>
    <recommendedName>
        <fullName evidence="1">Peptide chain release factor 3</fullName>
        <shortName evidence="1">RF-3</shortName>
    </recommendedName>
</protein>
<evidence type="ECO:0000255" key="1">
    <source>
        <dbReference type="HAMAP-Rule" id="MF_00072"/>
    </source>
</evidence>
<feature type="chain" id="PRO_1000071188" description="Peptide chain release factor 3">
    <location>
        <begin position="1"/>
        <end position="531"/>
    </location>
</feature>
<feature type="domain" description="tr-type G">
    <location>
        <begin position="13"/>
        <end position="282"/>
    </location>
</feature>
<feature type="binding site" evidence="1">
    <location>
        <begin position="22"/>
        <end position="29"/>
    </location>
    <ligand>
        <name>GTP</name>
        <dbReference type="ChEBI" id="CHEBI:37565"/>
    </ligand>
</feature>
<feature type="binding site" evidence="1">
    <location>
        <begin position="90"/>
        <end position="94"/>
    </location>
    <ligand>
        <name>GTP</name>
        <dbReference type="ChEBI" id="CHEBI:37565"/>
    </ligand>
</feature>
<feature type="binding site" evidence="1">
    <location>
        <begin position="144"/>
        <end position="147"/>
    </location>
    <ligand>
        <name>GTP</name>
        <dbReference type="ChEBI" id="CHEBI:37565"/>
    </ligand>
</feature>
<gene>
    <name evidence="1" type="primary">prfC</name>
    <name type="ordered locus">VC0395_A0190</name>
    <name type="ordered locus">VC395_0676</name>
</gene>
<reference key="1">
    <citation type="submission" date="2007-03" db="EMBL/GenBank/DDBJ databases">
        <authorList>
            <person name="Heidelberg J."/>
        </authorList>
    </citation>
    <scope>NUCLEOTIDE SEQUENCE [LARGE SCALE GENOMIC DNA]</scope>
    <source>
        <strain>ATCC 39541 / Classical Ogawa 395 / O395</strain>
    </source>
</reference>
<reference key="2">
    <citation type="journal article" date="2008" name="PLoS ONE">
        <title>A recalibrated molecular clock and independent origins for the cholera pandemic clones.</title>
        <authorList>
            <person name="Feng L."/>
            <person name="Reeves P.R."/>
            <person name="Lan R."/>
            <person name="Ren Y."/>
            <person name="Gao C."/>
            <person name="Zhou Z."/>
            <person name="Ren Y."/>
            <person name="Cheng J."/>
            <person name="Wang W."/>
            <person name="Wang J."/>
            <person name="Qian W."/>
            <person name="Li D."/>
            <person name="Wang L."/>
        </authorList>
    </citation>
    <scope>NUCLEOTIDE SEQUENCE [LARGE SCALE GENOMIC DNA]</scope>
    <source>
        <strain>ATCC 39541 / Classical Ogawa 395 / O395</strain>
    </source>
</reference>
<keyword id="KW-0963">Cytoplasm</keyword>
<keyword id="KW-0342">GTP-binding</keyword>
<keyword id="KW-0547">Nucleotide-binding</keyword>
<keyword id="KW-0648">Protein biosynthesis</keyword>